<protein>
    <recommendedName>
        <fullName>Aquaporin PIP2-5</fullName>
    </recommendedName>
    <alternativeName>
        <fullName>OsPIP2;5</fullName>
    </alternativeName>
    <alternativeName>
        <fullName>Plasma membrane intrinsic protein 2-5</fullName>
    </alternativeName>
</protein>
<reference key="1">
    <citation type="journal article" date="2005" name="Nature">
        <title>The map-based sequence of the rice genome.</title>
        <authorList>
            <consortium name="International rice genome sequencing project (IRGSP)"/>
        </authorList>
    </citation>
    <scope>NUCLEOTIDE SEQUENCE [LARGE SCALE GENOMIC DNA]</scope>
    <source>
        <strain>cv. Nipponbare</strain>
    </source>
</reference>
<reference key="2">
    <citation type="journal article" date="2013" name="Rice">
        <title>Improvement of the Oryza sativa Nipponbare reference genome using next generation sequence and optical map data.</title>
        <authorList>
            <person name="Kawahara Y."/>
            <person name="de la Bastide M."/>
            <person name="Hamilton J.P."/>
            <person name="Kanamori H."/>
            <person name="McCombie W.R."/>
            <person name="Ouyang S."/>
            <person name="Schwartz D.C."/>
            <person name="Tanaka T."/>
            <person name="Wu J."/>
            <person name="Zhou S."/>
            <person name="Childs K.L."/>
            <person name="Davidson R.M."/>
            <person name="Lin H."/>
            <person name="Quesada-Ocampo L."/>
            <person name="Vaillancourt B."/>
            <person name="Sakai H."/>
            <person name="Lee S.S."/>
            <person name="Kim J."/>
            <person name="Numa H."/>
            <person name="Itoh T."/>
            <person name="Buell C.R."/>
            <person name="Matsumoto T."/>
        </authorList>
    </citation>
    <scope>GENOME REANNOTATION</scope>
    <source>
        <strain>cv. Nipponbare</strain>
    </source>
</reference>
<reference key="3">
    <citation type="journal article" date="2005" name="PLoS Biol.">
        <title>The genomes of Oryza sativa: a history of duplications.</title>
        <authorList>
            <person name="Yu J."/>
            <person name="Wang J."/>
            <person name="Lin W."/>
            <person name="Li S."/>
            <person name="Li H."/>
            <person name="Zhou J."/>
            <person name="Ni P."/>
            <person name="Dong W."/>
            <person name="Hu S."/>
            <person name="Zeng C."/>
            <person name="Zhang J."/>
            <person name="Zhang Y."/>
            <person name="Li R."/>
            <person name="Xu Z."/>
            <person name="Li S."/>
            <person name="Li X."/>
            <person name="Zheng H."/>
            <person name="Cong L."/>
            <person name="Lin L."/>
            <person name="Yin J."/>
            <person name="Geng J."/>
            <person name="Li G."/>
            <person name="Shi J."/>
            <person name="Liu J."/>
            <person name="Lv H."/>
            <person name="Li J."/>
            <person name="Wang J."/>
            <person name="Deng Y."/>
            <person name="Ran L."/>
            <person name="Shi X."/>
            <person name="Wang X."/>
            <person name="Wu Q."/>
            <person name="Li C."/>
            <person name="Ren X."/>
            <person name="Wang J."/>
            <person name="Wang X."/>
            <person name="Li D."/>
            <person name="Liu D."/>
            <person name="Zhang X."/>
            <person name="Ji Z."/>
            <person name="Zhao W."/>
            <person name="Sun Y."/>
            <person name="Zhang Z."/>
            <person name="Bao J."/>
            <person name="Han Y."/>
            <person name="Dong L."/>
            <person name="Ji J."/>
            <person name="Chen P."/>
            <person name="Wu S."/>
            <person name="Liu J."/>
            <person name="Xiao Y."/>
            <person name="Bu D."/>
            <person name="Tan J."/>
            <person name="Yang L."/>
            <person name="Ye C."/>
            <person name="Zhang J."/>
            <person name="Xu J."/>
            <person name="Zhou Y."/>
            <person name="Yu Y."/>
            <person name="Zhang B."/>
            <person name="Zhuang S."/>
            <person name="Wei H."/>
            <person name="Liu B."/>
            <person name="Lei M."/>
            <person name="Yu H."/>
            <person name="Li Y."/>
            <person name="Xu H."/>
            <person name="Wei S."/>
            <person name="He X."/>
            <person name="Fang L."/>
            <person name="Zhang Z."/>
            <person name="Zhang Y."/>
            <person name="Huang X."/>
            <person name="Su Z."/>
            <person name="Tong W."/>
            <person name="Li J."/>
            <person name="Tong Z."/>
            <person name="Li S."/>
            <person name="Ye J."/>
            <person name="Wang L."/>
            <person name="Fang L."/>
            <person name="Lei T."/>
            <person name="Chen C.-S."/>
            <person name="Chen H.-C."/>
            <person name="Xu Z."/>
            <person name="Li H."/>
            <person name="Huang H."/>
            <person name="Zhang F."/>
            <person name="Xu H."/>
            <person name="Li N."/>
            <person name="Zhao C."/>
            <person name="Li S."/>
            <person name="Dong L."/>
            <person name="Huang Y."/>
            <person name="Li L."/>
            <person name="Xi Y."/>
            <person name="Qi Q."/>
            <person name="Li W."/>
            <person name="Zhang B."/>
            <person name="Hu W."/>
            <person name="Zhang Y."/>
            <person name="Tian X."/>
            <person name="Jiao Y."/>
            <person name="Liang X."/>
            <person name="Jin J."/>
            <person name="Gao L."/>
            <person name="Zheng W."/>
            <person name="Hao B."/>
            <person name="Liu S.-M."/>
            <person name="Wang W."/>
            <person name="Yuan L."/>
            <person name="Cao M."/>
            <person name="McDermott J."/>
            <person name="Samudrala R."/>
            <person name="Wang J."/>
            <person name="Wong G.K.-S."/>
            <person name="Yang H."/>
        </authorList>
    </citation>
    <scope>NUCLEOTIDE SEQUENCE [LARGE SCALE GENOMIC DNA]</scope>
    <source>
        <strain>cv. Nipponbare</strain>
    </source>
</reference>
<reference key="4">
    <citation type="journal article" date="2005" name="Plant Cell Physiol.">
        <title>Identification of 33 rice aquaporin genes and analysis of their expression and function.</title>
        <authorList>
            <person name="Sakurai J."/>
            <person name="Ishikawa F."/>
            <person name="Yamaguchi T."/>
            <person name="Uemura M."/>
            <person name="Maeshima M."/>
        </authorList>
    </citation>
    <scope>NOMENCLATURE</scope>
    <scope>FUNCTION</scope>
    <scope>TISSUE SPECIFICITY</scope>
    <scope>INDUCTION</scope>
</reference>
<dbReference type="EMBL" id="AP003802">
    <property type="protein sequence ID" value="BAC15863.1"/>
    <property type="molecule type" value="Genomic_DNA"/>
</dbReference>
<dbReference type="EMBL" id="AP004668">
    <property type="protein sequence ID" value="BAC16116.1"/>
    <property type="molecule type" value="Genomic_DNA"/>
</dbReference>
<dbReference type="EMBL" id="AP014963">
    <property type="status" value="NOT_ANNOTATED_CDS"/>
    <property type="molecule type" value="Genomic_DNA"/>
</dbReference>
<dbReference type="EMBL" id="CM000144">
    <property type="protein sequence ID" value="EAZ39660.1"/>
    <property type="molecule type" value="Genomic_DNA"/>
</dbReference>
<dbReference type="RefSeq" id="XP_015645289.1">
    <property type="nucleotide sequence ID" value="XM_015789803.1"/>
</dbReference>
<dbReference type="SMR" id="Q8GRI8"/>
<dbReference type="FunCoup" id="Q8GRI8">
    <property type="interactions" value="288"/>
</dbReference>
<dbReference type="STRING" id="39947.Q8GRI8"/>
<dbReference type="PaxDb" id="39947-Q8GRI8"/>
<dbReference type="InParanoid" id="Q8GRI8"/>
<dbReference type="OrthoDB" id="608171at2759"/>
<dbReference type="Proteomes" id="UP000000763">
    <property type="component" value="Chromosome 7"/>
</dbReference>
<dbReference type="Proteomes" id="UP000007752">
    <property type="component" value="Chromosome 7"/>
</dbReference>
<dbReference type="Proteomes" id="UP000059680">
    <property type="component" value="Chromosome 7"/>
</dbReference>
<dbReference type="GO" id="GO:0005886">
    <property type="term" value="C:plasma membrane"/>
    <property type="evidence" value="ECO:0000318"/>
    <property type="project" value="GO_Central"/>
</dbReference>
<dbReference type="GO" id="GO:0015250">
    <property type="term" value="F:water channel activity"/>
    <property type="evidence" value="ECO:0000318"/>
    <property type="project" value="GO_Central"/>
</dbReference>
<dbReference type="CDD" id="cd00333">
    <property type="entry name" value="MIP"/>
    <property type="match status" value="1"/>
</dbReference>
<dbReference type="FunFam" id="1.20.1080.10:FF:000001">
    <property type="entry name" value="Probable aquaporin PIP1-2"/>
    <property type="match status" value="1"/>
</dbReference>
<dbReference type="Gene3D" id="1.20.1080.10">
    <property type="entry name" value="Glycerol uptake facilitator protein"/>
    <property type="match status" value="1"/>
</dbReference>
<dbReference type="InterPro" id="IPR023271">
    <property type="entry name" value="Aquaporin-like"/>
</dbReference>
<dbReference type="InterPro" id="IPR034294">
    <property type="entry name" value="Aquaporin_transptr"/>
</dbReference>
<dbReference type="InterPro" id="IPR000425">
    <property type="entry name" value="MIP"/>
</dbReference>
<dbReference type="InterPro" id="IPR022357">
    <property type="entry name" value="MIP_CS"/>
</dbReference>
<dbReference type="NCBIfam" id="TIGR00861">
    <property type="entry name" value="MIP"/>
    <property type="match status" value="1"/>
</dbReference>
<dbReference type="PANTHER" id="PTHR45687">
    <property type="entry name" value="AQUAPORIN OR AQUAGLYCEROPORIN RELATED"/>
    <property type="match status" value="1"/>
</dbReference>
<dbReference type="Pfam" id="PF00230">
    <property type="entry name" value="MIP"/>
    <property type="match status" value="1"/>
</dbReference>
<dbReference type="PRINTS" id="PR00783">
    <property type="entry name" value="MINTRINSICP"/>
</dbReference>
<dbReference type="SUPFAM" id="SSF81338">
    <property type="entry name" value="Aquaporin-like"/>
    <property type="match status" value="1"/>
</dbReference>
<dbReference type="PROSITE" id="PS00221">
    <property type="entry name" value="MIP"/>
    <property type="match status" value="1"/>
</dbReference>
<comment type="function">
    <text evidence="3">Water channel required to facilitate the transport of water across cell membrane. May play a role in root water uptake.</text>
</comment>
<comment type="subcellular location">
    <subcellularLocation>
        <location evidence="1">Cell membrane</location>
        <topology evidence="1">Multi-pass membrane protein</topology>
    </subcellularLocation>
</comment>
<comment type="tissue specificity">
    <text evidence="3">Expressed in roots.</text>
</comment>
<comment type="induction">
    <text evidence="3">Circadian-regulation. Expression is higher during the light phase than during the dark phase. Down-regulated by chilling.</text>
</comment>
<comment type="domain">
    <text>Aquaporins contain two tandem repeats each containing three membrane-spanning domains and a pore-forming loop with the signature motif Asn-Pro-Ala (NPA).</text>
</comment>
<comment type="similarity">
    <text evidence="4">Belongs to the MIP/aquaporin (TC 1.A.8) family. PIP (TC 1.A.8.11) subfamily.</text>
</comment>
<keyword id="KW-1003">Cell membrane</keyword>
<keyword id="KW-0472">Membrane</keyword>
<keyword id="KW-1185">Reference proteome</keyword>
<keyword id="KW-0677">Repeat</keyword>
<keyword id="KW-0812">Transmembrane</keyword>
<keyword id="KW-1133">Transmembrane helix</keyword>
<keyword id="KW-0813">Transport</keyword>
<gene>
    <name type="primary">PIP2-5</name>
    <name type="ordered locus">Os07g0448400</name>
    <name type="ordered locus">LOC_Os07g26660</name>
    <name type="ORF">OJ1047_A06.108-1</name>
    <name type="ORF">OsJ_023143</name>
    <name type="ORF">P0475E07.134-1</name>
</gene>
<organism>
    <name type="scientific">Oryza sativa subsp. japonica</name>
    <name type="common">Rice</name>
    <dbReference type="NCBI Taxonomy" id="39947"/>
    <lineage>
        <taxon>Eukaryota</taxon>
        <taxon>Viridiplantae</taxon>
        <taxon>Streptophyta</taxon>
        <taxon>Embryophyta</taxon>
        <taxon>Tracheophyta</taxon>
        <taxon>Spermatophyta</taxon>
        <taxon>Magnoliopsida</taxon>
        <taxon>Liliopsida</taxon>
        <taxon>Poales</taxon>
        <taxon>Poaceae</taxon>
        <taxon>BOP clade</taxon>
        <taxon>Oryzoideae</taxon>
        <taxon>Oryzeae</taxon>
        <taxon>Oryzinae</taxon>
        <taxon>Oryza</taxon>
        <taxon>Oryza sativa</taxon>
    </lineage>
</organism>
<accession>Q8GRI8</accession>
<accession>A3BJC1</accession>
<name>PIP25_ORYSJ</name>
<evidence type="ECO:0000250" key="1"/>
<evidence type="ECO:0000255" key="2"/>
<evidence type="ECO:0000269" key="3">
    <source>
    </source>
</evidence>
<evidence type="ECO:0000305" key="4"/>
<feature type="chain" id="PRO_0000064038" description="Aquaporin PIP2-5">
    <location>
        <begin position="1"/>
        <end position="283"/>
    </location>
</feature>
<feature type="transmembrane region" description="Helical; Name=1" evidence="2">
    <location>
        <begin position="37"/>
        <end position="57"/>
    </location>
</feature>
<feature type="transmembrane region" description="Helical; Name=2" evidence="2">
    <location>
        <begin position="74"/>
        <end position="94"/>
    </location>
</feature>
<feature type="transmembrane region" description="Helical; Name=3" evidence="2">
    <location>
        <begin position="125"/>
        <end position="145"/>
    </location>
</feature>
<feature type="transmembrane region" description="Helical; Name=4" evidence="2">
    <location>
        <begin position="167"/>
        <end position="187"/>
    </location>
</feature>
<feature type="transmembrane region" description="Helical; Name=5" evidence="2">
    <location>
        <begin position="199"/>
        <end position="219"/>
    </location>
</feature>
<feature type="transmembrane region" description="Helical; Name=6" evidence="2">
    <location>
        <begin position="249"/>
        <end position="269"/>
    </location>
</feature>
<feature type="short sequence motif" description="NPA 1">
    <location>
        <begin position="106"/>
        <end position="108"/>
    </location>
</feature>
<feature type="short sequence motif" description="NPA 2">
    <location>
        <begin position="227"/>
        <end position="229"/>
    </location>
</feature>
<sequence length="283" mass="29719">MGKEADVEAGGVRDYEDPPPAPLVDIDELGRWSLYRAVIAEFVATLLFLYVTVATVIGYKHQTDASASGDDAACGGVGVLGIAWAFGGMIFILVYCTAGISGGHINPAVTFGLFLARKVSLVRAILYIVAQCLGAVCGVALVKGFQSSFYDRYGGGANELAAGYSKGTGLAAEIIGTFVLVYTVFSATDPKRNARDSHVPVLAPLPIGFAVFMVHLATIPVTGTGINPARSLGAAVVYNNSKAWSDQWIFWVGPFIGAAIAALYHQIVLRASARGYGSFRSNA</sequence>
<proteinExistence type="evidence at transcript level"/>